<evidence type="ECO:0000250" key="1">
    <source>
        <dbReference type="UniProtKB" id="P26281"/>
    </source>
</evidence>
<evidence type="ECO:0000305" key="2"/>
<proteinExistence type="inferred from homology"/>
<name>HPPK_STRP8</name>
<comment type="function">
    <text evidence="1">Catalyzes the transfer of pyrophosphate from adenosine triphosphate (ATP) to 6-hydroxymethyl-7,8-dihydropterin, an enzymatic step in folate biosynthesis pathway.</text>
</comment>
<comment type="catalytic activity">
    <reaction evidence="1">
        <text>6-hydroxymethyl-7,8-dihydropterin + ATP = (7,8-dihydropterin-6-yl)methyl diphosphate + AMP + H(+)</text>
        <dbReference type="Rhea" id="RHEA:11412"/>
        <dbReference type="ChEBI" id="CHEBI:15378"/>
        <dbReference type="ChEBI" id="CHEBI:30616"/>
        <dbReference type="ChEBI" id="CHEBI:44841"/>
        <dbReference type="ChEBI" id="CHEBI:72950"/>
        <dbReference type="ChEBI" id="CHEBI:456215"/>
        <dbReference type="EC" id="2.7.6.3"/>
    </reaction>
</comment>
<comment type="pathway">
    <text evidence="1">Cofactor biosynthesis; tetrahydrofolate biosynthesis; 2-amino-4-hydroxy-6-hydroxymethyl-7,8-dihydropteridine diphosphate from 7,8-dihydroneopterin triphosphate: step 4/4.</text>
</comment>
<comment type="similarity">
    <text evidence="2">Belongs to the HPPK family.</text>
</comment>
<gene>
    <name type="primary">folK</name>
    <name type="ordered locus">spyM18_1062</name>
</gene>
<dbReference type="EC" id="2.7.6.3" evidence="1"/>
<dbReference type="EMBL" id="AE009949">
    <property type="protein sequence ID" value="AAL97686.1"/>
    <property type="molecule type" value="Genomic_DNA"/>
</dbReference>
<dbReference type="RefSeq" id="WP_002995337.1">
    <property type="nucleotide sequence ID" value="NC_003485.1"/>
</dbReference>
<dbReference type="SMR" id="Q8P151"/>
<dbReference type="KEGG" id="spm:spyM18_1062"/>
<dbReference type="HOGENOM" id="CLU_097916_1_2_9"/>
<dbReference type="UniPathway" id="UPA00077">
    <property type="reaction ID" value="UER00155"/>
</dbReference>
<dbReference type="GO" id="GO:0003848">
    <property type="term" value="F:2-amino-4-hydroxy-6-hydroxymethyldihydropteridine diphosphokinase activity"/>
    <property type="evidence" value="ECO:0007669"/>
    <property type="project" value="UniProtKB-EC"/>
</dbReference>
<dbReference type="GO" id="GO:0005524">
    <property type="term" value="F:ATP binding"/>
    <property type="evidence" value="ECO:0007669"/>
    <property type="project" value="UniProtKB-KW"/>
</dbReference>
<dbReference type="GO" id="GO:0016301">
    <property type="term" value="F:kinase activity"/>
    <property type="evidence" value="ECO:0007669"/>
    <property type="project" value="UniProtKB-KW"/>
</dbReference>
<dbReference type="GO" id="GO:0046656">
    <property type="term" value="P:folic acid biosynthetic process"/>
    <property type="evidence" value="ECO:0007669"/>
    <property type="project" value="UniProtKB-KW"/>
</dbReference>
<dbReference type="GO" id="GO:0046654">
    <property type="term" value="P:tetrahydrofolate biosynthetic process"/>
    <property type="evidence" value="ECO:0007669"/>
    <property type="project" value="UniProtKB-UniPathway"/>
</dbReference>
<dbReference type="CDD" id="cd00483">
    <property type="entry name" value="HPPK"/>
    <property type="match status" value="1"/>
</dbReference>
<dbReference type="Gene3D" id="3.30.70.560">
    <property type="entry name" value="7,8-Dihydro-6-hydroxymethylpterin-pyrophosphokinase HPPK"/>
    <property type="match status" value="1"/>
</dbReference>
<dbReference type="InterPro" id="IPR000550">
    <property type="entry name" value="Hppk"/>
</dbReference>
<dbReference type="InterPro" id="IPR035907">
    <property type="entry name" value="Hppk_sf"/>
</dbReference>
<dbReference type="NCBIfam" id="TIGR01498">
    <property type="entry name" value="folK"/>
    <property type="match status" value="1"/>
</dbReference>
<dbReference type="PANTHER" id="PTHR43071">
    <property type="entry name" value="2-AMINO-4-HYDROXY-6-HYDROXYMETHYLDIHYDROPTERIDINE PYROPHOSPHOKINASE"/>
    <property type="match status" value="1"/>
</dbReference>
<dbReference type="PANTHER" id="PTHR43071:SF1">
    <property type="entry name" value="2-AMINO-4-HYDROXY-6-HYDROXYMETHYLDIHYDROPTERIDINE PYROPHOSPHOKINASE"/>
    <property type="match status" value="1"/>
</dbReference>
<dbReference type="Pfam" id="PF01288">
    <property type="entry name" value="HPPK"/>
    <property type="match status" value="1"/>
</dbReference>
<dbReference type="SUPFAM" id="SSF55083">
    <property type="entry name" value="6-hydroxymethyl-7,8-dihydropterin pyrophosphokinase, HPPK"/>
    <property type="match status" value="1"/>
</dbReference>
<dbReference type="PROSITE" id="PS00794">
    <property type="entry name" value="HPPK"/>
    <property type="match status" value="1"/>
</dbReference>
<sequence>MTIVYLSLGTNMRDRAAYLQKALETLADLPQTRLLAQSSIYETAAWGKTDQADFLNMACQLDTQLTAADFLKETQAIEQSLGRVRHEKWGSRTIDIDILLFGEEVYDTKELKVPHPYMTERAFVLIPLLELQPDLKLPPNHKFLRDYLAALDQSDITLFSAQQTEF</sequence>
<reference key="1">
    <citation type="journal article" date="2002" name="Proc. Natl. Acad. Sci. U.S.A.">
        <title>Genome sequence and comparative microarray analysis of serotype M18 group A Streptococcus strains associated with acute rheumatic fever outbreaks.</title>
        <authorList>
            <person name="Smoot J.C."/>
            <person name="Barbian K.D."/>
            <person name="Van Gompel J.J."/>
            <person name="Smoot L.M."/>
            <person name="Chaussee M.S."/>
            <person name="Sylva G.L."/>
            <person name="Sturdevant D.E."/>
            <person name="Ricklefs S.M."/>
            <person name="Porcella S.F."/>
            <person name="Parkins L.D."/>
            <person name="Beres S.B."/>
            <person name="Campbell D.S."/>
            <person name="Smith T.M."/>
            <person name="Zhang Q."/>
            <person name="Kapur V."/>
            <person name="Daly J.A."/>
            <person name="Veasy L.G."/>
            <person name="Musser J.M."/>
        </authorList>
    </citation>
    <scope>NUCLEOTIDE SEQUENCE [LARGE SCALE GENOMIC DNA]</scope>
    <source>
        <strain>MGAS8232</strain>
    </source>
</reference>
<organism>
    <name type="scientific">Streptococcus pyogenes serotype M18 (strain MGAS8232)</name>
    <dbReference type="NCBI Taxonomy" id="186103"/>
    <lineage>
        <taxon>Bacteria</taxon>
        <taxon>Bacillati</taxon>
        <taxon>Bacillota</taxon>
        <taxon>Bacilli</taxon>
        <taxon>Lactobacillales</taxon>
        <taxon>Streptococcaceae</taxon>
        <taxon>Streptococcus</taxon>
    </lineage>
</organism>
<protein>
    <recommendedName>
        <fullName evidence="1">2-amino-4-hydroxy-6-hydroxymethyldihydropteridine pyrophosphokinase</fullName>
        <ecNumber evidence="1">2.7.6.3</ecNumber>
    </recommendedName>
    <alternativeName>
        <fullName evidence="1">6-hydroxymethyl-7,8-dihydropterin pyrophosphokinase</fullName>
        <shortName evidence="1">PPPK</shortName>
    </alternativeName>
    <alternativeName>
        <fullName evidence="1">7,8-dihydro-6-hydroxymethylpterin-pyrophosphokinase</fullName>
        <shortName evidence="1">HPPK</shortName>
    </alternativeName>
</protein>
<feature type="chain" id="PRO_0000168263" description="2-amino-4-hydroxy-6-hydroxymethyldihydropteridine pyrophosphokinase">
    <location>
        <begin position="1"/>
        <end position="166"/>
    </location>
</feature>
<keyword id="KW-0067">ATP-binding</keyword>
<keyword id="KW-0289">Folate biosynthesis</keyword>
<keyword id="KW-0418">Kinase</keyword>
<keyword id="KW-0547">Nucleotide-binding</keyword>
<keyword id="KW-0808">Transferase</keyword>
<accession>Q8P151</accession>